<protein>
    <recommendedName>
        <fullName>Glycine dehydrogenase (decarboxylating) 1, mitochondrial</fullName>
        <ecNumber>1.4.4.2</ecNumber>
    </recommendedName>
    <alternativeName>
        <fullName>Glycine cleavage system P protein 1</fullName>
    </alternativeName>
    <alternativeName>
        <fullName>Glycine decarboxylase 1</fullName>
    </alternativeName>
    <alternativeName>
        <fullName>Glycine decarboxylase P-protein 1</fullName>
        <shortName>AtGLDP1</shortName>
    </alternativeName>
    <alternativeName>
        <fullName>Glycine dehydrogenase (aminomethyl-transferring) 1</fullName>
    </alternativeName>
</protein>
<name>GCSP1_ARATH</name>
<accession>Q94B78</accession>
<accession>O82642</accession>
<accession>Q8GTY1</accession>
<accession>Q8VZF0</accession>
<organism>
    <name type="scientific">Arabidopsis thaliana</name>
    <name type="common">Mouse-ear cress</name>
    <dbReference type="NCBI Taxonomy" id="3702"/>
    <lineage>
        <taxon>Eukaryota</taxon>
        <taxon>Viridiplantae</taxon>
        <taxon>Streptophyta</taxon>
        <taxon>Embryophyta</taxon>
        <taxon>Tracheophyta</taxon>
        <taxon>Spermatophyta</taxon>
        <taxon>Magnoliopsida</taxon>
        <taxon>eudicotyledons</taxon>
        <taxon>Gunneridae</taxon>
        <taxon>Pentapetalae</taxon>
        <taxon>rosids</taxon>
        <taxon>malvids</taxon>
        <taxon>Brassicales</taxon>
        <taxon>Brassicaceae</taxon>
        <taxon>Camelineae</taxon>
        <taxon>Arabidopsis</taxon>
    </lineage>
</organism>
<feature type="transit peptide" description="Mitochondrion" evidence="5">
    <location>
        <begin position="1"/>
        <end position="67"/>
    </location>
</feature>
<feature type="chain" id="PRO_0000010744" description="Glycine dehydrogenase (decarboxylating) 1, mitochondrial">
    <location>
        <begin position="68"/>
        <end position="1037"/>
    </location>
</feature>
<feature type="modified residue" description="S-glutathionyl cysteine; transient" evidence="4">
    <location>
        <position position="98"/>
    </location>
</feature>
<feature type="modified residue" description="S-glutathionyl cysteine" evidence="4">
    <location>
        <position position="402"/>
    </location>
</feature>
<feature type="modified residue" description="S-glutathionyl cysteine" evidence="4">
    <location>
        <position position="463"/>
    </location>
</feature>
<feature type="modified residue" description="N6-(pyridoxal phosphate)lysine" evidence="1">
    <location>
        <position position="774"/>
    </location>
</feature>
<feature type="modified residue" description="S-glutathionyl cysteine; transient" evidence="4">
    <location>
        <position position="777"/>
    </location>
</feature>
<feature type="modified residue" description="S-glutathionyl cysteine; transient" evidence="4">
    <location>
        <position position="943"/>
    </location>
</feature>
<feature type="modified residue" description="S-glutathionyl cysteine; transient" evidence="4">
    <location>
        <position position="1022"/>
    </location>
</feature>
<feature type="sequence conflict" description="In Ref. 3; AAN17423." evidence="5" ref="3">
    <original>C</original>
    <variation>R</variation>
    <location>
        <position position="578"/>
    </location>
</feature>
<feature type="sequence conflict" description="In Ref. 3; AAL57651/AAN64523." evidence="5" ref="3">
    <original>H</original>
    <variation>R</variation>
    <location>
        <position position="884"/>
    </location>
</feature>
<feature type="sequence conflict" description="In Ref. 3; AAN17423." evidence="5" ref="3">
    <original>T</original>
    <variation>A</variation>
    <location>
        <position position="925"/>
    </location>
</feature>
<feature type="sequence conflict" description="In Ref. 3; AAK68740/AAM91322." evidence="5" ref="3">
    <original>A</original>
    <variation>T</variation>
    <location>
        <position position="1032"/>
    </location>
</feature>
<evidence type="ECO:0000250" key="1"/>
<evidence type="ECO:0000269" key="2">
    <source>
    </source>
</evidence>
<evidence type="ECO:0000269" key="3">
    <source>
    </source>
</evidence>
<evidence type="ECO:0000269" key="4">
    <source>
    </source>
</evidence>
<evidence type="ECO:0000305" key="5"/>
<gene>
    <name type="primary">GLDP1</name>
    <name type="synonym">GDP1</name>
    <name type="ordered locus">At4g33010</name>
    <name type="ORF">F26P21.130</name>
</gene>
<keyword id="KW-0025">Alternative splicing</keyword>
<keyword id="KW-0318">Glutathionylation</keyword>
<keyword id="KW-0496">Mitochondrion</keyword>
<keyword id="KW-0560">Oxidoreductase</keyword>
<keyword id="KW-0663">Pyridoxal phosphate</keyword>
<keyword id="KW-1185">Reference proteome</keyword>
<keyword id="KW-0702">S-nitrosylation</keyword>
<keyword id="KW-0809">Transit peptide</keyword>
<dbReference type="EC" id="1.4.4.2"/>
<dbReference type="EMBL" id="AL031804">
    <property type="protein sequence ID" value="CAA21210.1"/>
    <property type="molecule type" value="Genomic_DNA"/>
</dbReference>
<dbReference type="EMBL" id="AL161582">
    <property type="protein sequence ID" value="CAB80018.1"/>
    <property type="molecule type" value="Genomic_DNA"/>
</dbReference>
<dbReference type="EMBL" id="CP002687">
    <property type="protein sequence ID" value="AEE86159.1"/>
    <property type="molecule type" value="Genomic_DNA"/>
</dbReference>
<dbReference type="EMBL" id="AY063903">
    <property type="protein sequence ID" value="AAL36259.1"/>
    <property type="molecule type" value="mRNA"/>
</dbReference>
<dbReference type="EMBL" id="AY091186">
    <property type="protein sequence ID" value="AAM14125.1"/>
    <property type="molecule type" value="mRNA"/>
</dbReference>
<dbReference type="EMBL" id="AY042800">
    <property type="protein sequence ID" value="AAK68740.1"/>
    <property type="molecule type" value="mRNA"/>
</dbReference>
<dbReference type="EMBL" id="AY128922">
    <property type="protein sequence ID" value="AAM91322.1"/>
    <property type="molecule type" value="mRNA"/>
</dbReference>
<dbReference type="EMBL" id="AY065004">
    <property type="protein sequence ID" value="AAL57651.1"/>
    <property type="molecule type" value="mRNA"/>
</dbReference>
<dbReference type="EMBL" id="BT001132">
    <property type="protein sequence ID" value="AAN64523.1"/>
    <property type="molecule type" value="mRNA"/>
</dbReference>
<dbReference type="EMBL" id="BT000446">
    <property type="protein sequence ID" value="AAN17423.1"/>
    <property type="status" value="ALT_FRAME"/>
    <property type="molecule type" value="mRNA"/>
</dbReference>
<dbReference type="PIR" id="T05309">
    <property type="entry name" value="T05309"/>
</dbReference>
<dbReference type="RefSeq" id="NP_195027.1">
    <molecule id="Q94B78-1"/>
    <property type="nucleotide sequence ID" value="NM_119455.3"/>
</dbReference>
<dbReference type="SMR" id="Q94B78"/>
<dbReference type="BioGRID" id="14723">
    <property type="interactions" value="8"/>
</dbReference>
<dbReference type="FunCoup" id="Q94B78">
    <property type="interactions" value="1647"/>
</dbReference>
<dbReference type="IntAct" id="Q94B78">
    <property type="interactions" value="1"/>
</dbReference>
<dbReference type="STRING" id="3702.Q94B78"/>
<dbReference type="iPTMnet" id="Q94B78"/>
<dbReference type="PaxDb" id="3702-AT4G33010.1"/>
<dbReference type="ProteomicsDB" id="222042">
    <molecule id="Q94B78-1"/>
</dbReference>
<dbReference type="EnsemblPlants" id="AT4G33010.1">
    <molecule id="Q94B78-1"/>
    <property type="protein sequence ID" value="AT4G33010.1"/>
    <property type="gene ID" value="AT4G33010"/>
</dbReference>
<dbReference type="GeneID" id="829438"/>
<dbReference type="Gramene" id="AT4G33010.1">
    <molecule id="Q94B78-1"/>
    <property type="protein sequence ID" value="AT4G33010.1"/>
    <property type="gene ID" value="AT4G33010"/>
</dbReference>
<dbReference type="KEGG" id="ath:AT4G33010"/>
<dbReference type="Araport" id="AT4G33010"/>
<dbReference type="TAIR" id="AT4G33010">
    <property type="gene designation" value="GLDP1"/>
</dbReference>
<dbReference type="eggNOG" id="KOG2040">
    <property type="taxonomic scope" value="Eukaryota"/>
</dbReference>
<dbReference type="InParanoid" id="Q94B78"/>
<dbReference type="OMA" id="RNLICTC"/>
<dbReference type="OrthoDB" id="6537869at2759"/>
<dbReference type="PhylomeDB" id="Q94B78"/>
<dbReference type="BioCyc" id="ARA:AT4G33010-MONOMER"/>
<dbReference type="BioCyc" id="MetaCyc:AT4G33010-MONOMER"/>
<dbReference type="BRENDA" id="1.4.1.27">
    <property type="organism ID" value="399"/>
</dbReference>
<dbReference type="PRO" id="PR:Q94B78"/>
<dbReference type="Proteomes" id="UP000006548">
    <property type="component" value="Chromosome 4"/>
</dbReference>
<dbReference type="ExpressionAtlas" id="Q94B78">
    <property type="expression patterns" value="baseline and differential"/>
</dbReference>
<dbReference type="GO" id="GO:0048046">
    <property type="term" value="C:apoplast"/>
    <property type="evidence" value="ECO:0007005"/>
    <property type="project" value="TAIR"/>
</dbReference>
<dbReference type="GO" id="GO:0009507">
    <property type="term" value="C:chloroplast"/>
    <property type="evidence" value="ECO:0007005"/>
    <property type="project" value="TAIR"/>
</dbReference>
<dbReference type="GO" id="GO:0009941">
    <property type="term" value="C:chloroplast envelope"/>
    <property type="evidence" value="ECO:0007005"/>
    <property type="project" value="TAIR"/>
</dbReference>
<dbReference type="GO" id="GO:0009570">
    <property type="term" value="C:chloroplast stroma"/>
    <property type="evidence" value="ECO:0007005"/>
    <property type="project" value="TAIR"/>
</dbReference>
<dbReference type="GO" id="GO:0009534">
    <property type="term" value="C:chloroplast thylakoid"/>
    <property type="evidence" value="ECO:0007005"/>
    <property type="project" value="TAIR"/>
</dbReference>
<dbReference type="GO" id="GO:0005829">
    <property type="term" value="C:cytosol"/>
    <property type="evidence" value="ECO:0007005"/>
    <property type="project" value="TAIR"/>
</dbReference>
<dbReference type="GO" id="GO:0005739">
    <property type="term" value="C:mitochondrion"/>
    <property type="evidence" value="ECO:0007005"/>
    <property type="project" value="TAIR"/>
</dbReference>
<dbReference type="GO" id="GO:0005886">
    <property type="term" value="C:plasma membrane"/>
    <property type="evidence" value="ECO:0007005"/>
    <property type="project" value="TAIR"/>
</dbReference>
<dbReference type="GO" id="GO:0004375">
    <property type="term" value="F:glycine dehydrogenase (decarboxylating) activity"/>
    <property type="evidence" value="ECO:0007669"/>
    <property type="project" value="UniProtKB-EC"/>
</dbReference>
<dbReference type="GO" id="GO:0003729">
    <property type="term" value="F:mRNA binding"/>
    <property type="evidence" value="ECO:0000314"/>
    <property type="project" value="TAIR"/>
</dbReference>
<dbReference type="GO" id="GO:0006546">
    <property type="term" value="P:glycine catabolic process"/>
    <property type="evidence" value="ECO:0000315"/>
    <property type="project" value="TAIR"/>
</dbReference>
<dbReference type="GO" id="GO:0046686">
    <property type="term" value="P:response to cadmium ion"/>
    <property type="evidence" value="ECO:0000270"/>
    <property type="project" value="TAIR"/>
</dbReference>
<dbReference type="CDD" id="cd00613">
    <property type="entry name" value="GDC-P"/>
    <property type="match status" value="2"/>
</dbReference>
<dbReference type="FunFam" id="3.90.1150.10:FF:000025">
    <property type="entry name" value="Glycine cleavage system P protein"/>
    <property type="match status" value="1"/>
</dbReference>
<dbReference type="FunFam" id="3.40.640.10:FF:000005">
    <property type="entry name" value="Glycine dehydrogenase (decarboxylating), mitochondrial"/>
    <property type="match status" value="1"/>
</dbReference>
<dbReference type="FunFam" id="3.90.1150.10:FF:000007">
    <property type="entry name" value="Glycine dehydrogenase (decarboxylating), mitochondrial"/>
    <property type="match status" value="1"/>
</dbReference>
<dbReference type="FunFam" id="3.40.640.10:FF:000007">
    <property type="entry name" value="glycine dehydrogenase (Decarboxylating), mitochondrial"/>
    <property type="match status" value="1"/>
</dbReference>
<dbReference type="Gene3D" id="3.90.1150.10">
    <property type="entry name" value="Aspartate Aminotransferase, domain 1"/>
    <property type="match status" value="2"/>
</dbReference>
<dbReference type="Gene3D" id="3.40.640.10">
    <property type="entry name" value="Type I PLP-dependent aspartate aminotransferase-like (Major domain)"/>
    <property type="match status" value="2"/>
</dbReference>
<dbReference type="HAMAP" id="MF_00711">
    <property type="entry name" value="GcvP"/>
    <property type="match status" value="1"/>
</dbReference>
<dbReference type="InterPro" id="IPR003437">
    <property type="entry name" value="GcvP"/>
</dbReference>
<dbReference type="InterPro" id="IPR049316">
    <property type="entry name" value="GDC-P_C"/>
</dbReference>
<dbReference type="InterPro" id="IPR049315">
    <property type="entry name" value="GDC-P_N"/>
</dbReference>
<dbReference type="InterPro" id="IPR020581">
    <property type="entry name" value="GDC_P"/>
</dbReference>
<dbReference type="InterPro" id="IPR015424">
    <property type="entry name" value="PyrdxlP-dep_Trfase"/>
</dbReference>
<dbReference type="InterPro" id="IPR015421">
    <property type="entry name" value="PyrdxlP-dep_Trfase_major"/>
</dbReference>
<dbReference type="InterPro" id="IPR015422">
    <property type="entry name" value="PyrdxlP-dep_Trfase_small"/>
</dbReference>
<dbReference type="NCBIfam" id="TIGR00461">
    <property type="entry name" value="gcvP"/>
    <property type="match status" value="1"/>
</dbReference>
<dbReference type="NCBIfam" id="NF003346">
    <property type="entry name" value="PRK04366.1"/>
    <property type="match status" value="1"/>
</dbReference>
<dbReference type="PANTHER" id="PTHR11773:SF1">
    <property type="entry name" value="GLYCINE DEHYDROGENASE (DECARBOXYLATING), MITOCHONDRIAL"/>
    <property type="match status" value="1"/>
</dbReference>
<dbReference type="PANTHER" id="PTHR11773">
    <property type="entry name" value="GLYCINE DEHYDROGENASE, DECARBOXYLATING"/>
    <property type="match status" value="1"/>
</dbReference>
<dbReference type="Pfam" id="PF21478">
    <property type="entry name" value="GcvP2_C"/>
    <property type="match status" value="1"/>
</dbReference>
<dbReference type="Pfam" id="PF02347">
    <property type="entry name" value="GDC-P"/>
    <property type="match status" value="2"/>
</dbReference>
<dbReference type="SUPFAM" id="SSF53383">
    <property type="entry name" value="PLP-dependent transferases"/>
    <property type="match status" value="2"/>
</dbReference>
<reference key="1">
    <citation type="journal article" date="1999" name="Nature">
        <title>Sequence and analysis of chromosome 4 of the plant Arabidopsis thaliana.</title>
        <authorList>
            <person name="Mayer K.F.X."/>
            <person name="Schueller C."/>
            <person name="Wambutt R."/>
            <person name="Murphy G."/>
            <person name="Volckaert G."/>
            <person name="Pohl T."/>
            <person name="Duesterhoeft A."/>
            <person name="Stiekema W."/>
            <person name="Entian K.-D."/>
            <person name="Terryn N."/>
            <person name="Harris B."/>
            <person name="Ansorge W."/>
            <person name="Brandt P."/>
            <person name="Grivell L.A."/>
            <person name="Rieger M."/>
            <person name="Weichselgartner M."/>
            <person name="de Simone V."/>
            <person name="Obermaier B."/>
            <person name="Mache R."/>
            <person name="Mueller M."/>
            <person name="Kreis M."/>
            <person name="Delseny M."/>
            <person name="Puigdomenech P."/>
            <person name="Watson M."/>
            <person name="Schmidtheini T."/>
            <person name="Reichert B."/>
            <person name="Portetelle D."/>
            <person name="Perez-Alonso M."/>
            <person name="Boutry M."/>
            <person name="Bancroft I."/>
            <person name="Vos P."/>
            <person name="Hoheisel J."/>
            <person name="Zimmermann W."/>
            <person name="Wedler H."/>
            <person name="Ridley P."/>
            <person name="Langham S.-A."/>
            <person name="McCullagh B."/>
            <person name="Bilham L."/>
            <person name="Robben J."/>
            <person name="van der Schueren J."/>
            <person name="Grymonprez B."/>
            <person name="Chuang Y.-J."/>
            <person name="Vandenbussche F."/>
            <person name="Braeken M."/>
            <person name="Weltjens I."/>
            <person name="Voet M."/>
            <person name="Bastiaens I."/>
            <person name="Aert R."/>
            <person name="Defoor E."/>
            <person name="Weitzenegger T."/>
            <person name="Bothe G."/>
            <person name="Ramsperger U."/>
            <person name="Hilbert H."/>
            <person name="Braun M."/>
            <person name="Holzer E."/>
            <person name="Brandt A."/>
            <person name="Peters S."/>
            <person name="van Staveren M."/>
            <person name="Dirkse W."/>
            <person name="Mooijman P."/>
            <person name="Klein Lankhorst R."/>
            <person name="Rose M."/>
            <person name="Hauf J."/>
            <person name="Koetter P."/>
            <person name="Berneiser S."/>
            <person name="Hempel S."/>
            <person name="Feldpausch M."/>
            <person name="Lamberth S."/>
            <person name="Van den Daele H."/>
            <person name="De Keyser A."/>
            <person name="Buysshaert C."/>
            <person name="Gielen J."/>
            <person name="Villarroel R."/>
            <person name="De Clercq R."/>
            <person name="van Montagu M."/>
            <person name="Rogers J."/>
            <person name="Cronin A."/>
            <person name="Quail M.A."/>
            <person name="Bray-Allen S."/>
            <person name="Clark L."/>
            <person name="Doggett J."/>
            <person name="Hall S."/>
            <person name="Kay M."/>
            <person name="Lennard N."/>
            <person name="McLay K."/>
            <person name="Mayes R."/>
            <person name="Pettett A."/>
            <person name="Rajandream M.A."/>
            <person name="Lyne M."/>
            <person name="Benes V."/>
            <person name="Rechmann S."/>
            <person name="Borkova D."/>
            <person name="Bloecker H."/>
            <person name="Scharfe M."/>
            <person name="Grimm M."/>
            <person name="Loehnert T.-H."/>
            <person name="Dose S."/>
            <person name="de Haan M."/>
            <person name="Maarse A.C."/>
            <person name="Schaefer M."/>
            <person name="Mueller-Auer S."/>
            <person name="Gabel C."/>
            <person name="Fuchs M."/>
            <person name="Fartmann B."/>
            <person name="Granderath K."/>
            <person name="Dauner D."/>
            <person name="Herzl A."/>
            <person name="Neumann S."/>
            <person name="Argiriou A."/>
            <person name="Vitale D."/>
            <person name="Liguori R."/>
            <person name="Piravandi E."/>
            <person name="Massenet O."/>
            <person name="Quigley F."/>
            <person name="Clabauld G."/>
            <person name="Muendlein A."/>
            <person name="Felber R."/>
            <person name="Schnabl S."/>
            <person name="Hiller R."/>
            <person name="Schmidt W."/>
            <person name="Lecharny A."/>
            <person name="Aubourg S."/>
            <person name="Chefdor F."/>
            <person name="Cooke R."/>
            <person name="Berger C."/>
            <person name="Monfort A."/>
            <person name="Casacuberta E."/>
            <person name="Gibbons T."/>
            <person name="Weber N."/>
            <person name="Vandenbol M."/>
            <person name="Bargues M."/>
            <person name="Terol J."/>
            <person name="Torres A."/>
            <person name="Perez-Perez A."/>
            <person name="Purnelle B."/>
            <person name="Bent E."/>
            <person name="Johnson S."/>
            <person name="Tacon D."/>
            <person name="Jesse T."/>
            <person name="Heijnen L."/>
            <person name="Schwarz S."/>
            <person name="Scholler P."/>
            <person name="Heber S."/>
            <person name="Francs P."/>
            <person name="Bielke C."/>
            <person name="Frishman D."/>
            <person name="Haase D."/>
            <person name="Lemcke K."/>
            <person name="Mewes H.-W."/>
            <person name="Stocker S."/>
            <person name="Zaccaria P."/>
            <person name="Bevan M."/>
            <person name="Wilson R.K."/>
            <person name="de la Bastide M."/>
            <person name="Habermann K."/>
            <person name="Parnell L."/>
            <person name="Dedhia N."/>
            <person name="Gnoj L."/>
            <person name="Schutz K."/>
            <person name="Huang E."/>
            <person name="Spiegel L."/>
            <person name="Sekhon M."/>
            <person name="Murray J."/>
            <person name="Sheet P."/>
            <person name="Cordes M."/>
            <person name="Abu-Threideh J."/>
            <person name="Stoneking T."/>
            <person name="Kalicki J."/>
            <person name="Graves T."/>
            <person name="Harmon G."/>
            <person name="Edwards J."/>
            <person name="Latreille P."/>
            <person name="Courtney L."/>
            <person name="Cloud J."/>
            <person name="Abbott A."/>
            <person name="Scott K."/>
            <person name="Johnson D."/>
            <person name="Minx P."/>
            <person name="Bentley D."/>
            <person name="Fulton B."/>
            <person name="Miller N."/>
            <person name="Greco T."/>
            <person name="Kemp K."/>
            <person name="Kramer J."/>
            <person name="Fulton L."/>
            <person name="Mardis E."/>
            <person name="Dante M."/>
            <person name="Pepin K."/>
            <person name="Hillier L.W."/>
            <person name="Nelson J."/>
            <person name="Spieth J."/>
            <person name="Ryan E."/>
            <person name="Andrews S."/>
            <person name="Geisel C."/>
            <person name="Layman D."/>
            <person name="Du H."/>
            <person name="Ali J."/>
            <person name="Berghoff A."/>
            <person name="Jones K."/>
            <person name="Drone K."/>
            <person name="Cotton M."/>
            <person name="Joshu C."/>
            <person name="Antonoiu B."/>
            <person name="Zidanic M."/>
            <person name="Strong C."/>
            <person name="Sun H."/>
            <person name="Lamar B."/>
            <person name="Yordan C."/>
            <person name="Ma P."/>
            <person name="Zhong J."/>
            <person name="Preston R."/>
            <person name="Vil D."/>
            <person name="Shekher M."/>
            <person name="Matero A."/>
            <person name="Shah R."/>
            <person name="Swaby I.K."/>
            <person name="O'Shaughnessy A."/>
            <person name="Rodriguez M."/>
            <person name="Hoffman J."/>
            <person name="Till S."/>
            <person name="Granat S."/>
            <person name="Shohdy N."/>
            <person name="Hasegawa A."/>
            <person name="Hameed A."/>
            <person name="Lodhi M."/>
            <person name="Johnson A."/>
            <person name="Chen E."/>
            <person name="Marra M.A."/>
            <person name="Martienssen R."/>
            <person name="McCombie W.R."/>
        </authorList>
    </citation>
    <scope>NUCLEOTIDE SEQUENCE [LARGE SCALE GENOMIC DNA]</scope>
    <source>
        <strain>cv. Columbia</strain>
    </source>
</reference>
<reference key="2">
    <citation type="journal article" date="2017" name="Plant J.">
        <title>Araport11: a complete reannotation of the Arabidopsis thaliana reference genome.</title>
        <authorList>
            <person name="Cheng C.Y."/>
            <person name="Krishnakumar V."/>
            <person name="Chan A.P."/>
            <person name="Thibaud-Nissen F."/>
            <person name="Schobel S."/>
            <person name="Town C.D."/>
        </authorList>
    </citation>
    <scope>GENOME REANNOTATION</scope>
    <source>
        <strain>cv. Columbia</strain>
    </source>
</reference>
<reference key="3">
    <citation type="journal article" date="2003" name="Science">
        <title>Empirical analysis of transcriptional activity in the Arabidopsis genome.</title>
        <authorList>
            <person name="Yamada K."/>
            <person name="Lim J."/>
            <person name="Dale J.M."/>
            <person name="Chen H."/>
            <person name="Shinn P."/>
            <person name="Palm C.J."/>
            <person name="Southwick A.M."/>
            <person name="Wu H.C."/>
            <person name="Kim C.J."/>
            <person name="Nguyen M."/>
            <person name="Pham P.K."/>
            <person name="Cheuk R.F."/>
            <person name="Karlin-Newmann G."/>
            <person name="Liu S.X."/>
            <person name="Lam B."/>
            <person name="Sakano H."/>
            <person name="Wu T."/>
            <person name="Yu G."/>
            <person name="Miranda M."/>
            <person name="Quach H.L."/>
            <person name="Tripp M."/>
            <person name="Chang C.H."/>
            <person name="Lee J.M."/>
            <person name="Toriumi M.J."/>
            <person name="Chan M.M."/>
            <person name="Tang C.C."/>
            <person name="Onodera C.S."/>
            <person name="Deng J.M."/>
            <person name="Akiyama K."/>
            <person name="Ansari Y."/>
            <person name="Arakawa T."/>
            <person name="Banh J."/>
            <person name="Banno F."/>
            <person name="Bowser L."/>
            <person name="Brooks S.Y."/>
            <person name="Carninci P."/>
            <person name="Chao Q."/>
            <person name="Choy N."/>
            <person name="Enju A."/>
            <person name="Goldsmith A.D."/>
            <person name="Gurjal M."/>
            <person name="Hansen N.F."/>
            <person name="Hayashizaki Y."/>
            <person name="Johnson-Hopson C."/>
            <person name="Hsuan V.W."/>
            <person name="Iida K."/>
            <person name="Karnes M."/>
            <person name="Khan S."/>
            <person name="Koesema E."/>
            <person name="Ishida J."/>
            <person name="Jiang P.X."/>
            <person name="Jones T."/>
            <person name="Kawai J."/>
            <person name="Kamiya A."/>
            <person name="Meyers C."/>
            <person name="Nakajima M."/>
            <person name="Narusaka M."/>
            <person name="Seki M."/>
            <person name="Sakurai T."/>
            <person name="Satou M."/>
            <person name="Tamse R."/>
            <person name="Vaysberg M."/>
            <person name="Wallender E.K."/>
            <person name="Wong C."/>
            <person name="Yamamura Y."/>
            <person name="Yuan S."/>
            <person name="Shinozaki K."/>
            <person name="Davis R.W."/>
            <person name="Theologis A."/>
            <person name="Ecker J.R."/>
        </authorList>
    </citation>
    <scope>NUCLEOTIDE SEQUENCE [LARGE SCALE MRNA]</scope>
    <source>
        <strain>cv. Columbia</strain>
    </source>
</reference>
<reference key="4">
    <citation type="journal article" date="2001" name="Trends Plant Sci.">
        <title>The glycine decarboxylase system: a fascinating complex.</title>
        <authorList>
            <person name="Douce R."/>
            <person name="Bourguignon J."/>
            <person name="Neuburger M."/>
            <person name="Rebeille F."/>
        </authorList>
    </citation>
    <scope>REVIEW</scope>
</reference>
<reference key="5">
    <citation type="journal article" date="2003" name="J. Exp. Bot.">
        <title>Genetic manipulation of glycine decarboxylation.</title>
        <authorList>
            <person name="Bauwe H."/>
            <person name="Kolukisaoglu U."/>
        </authorList>
    </citation>
    <scope>REVIEW</scope>
    <scope>NOMENCLATURE</scope>
</reference>
<reference key="6">
    <citation type="journal article" date="2004" name="Plant Cell">
        <title>Experimental analysis of the Arabidopsis mitochondrial proteome highlights signaling and regulatory components, provides assessment of targeting prediction programs, and indicates plant-specific mitochondrial proteins.</title>
        <authorList>
            <person name="Heazlewood J.L."/>
            <person name="Tonti-Filippini J.S."/>
            <person name="Gout A.M."/>
            <person name="Day D.A."/>
            <person name="Whelan J."/>
            <person name="Millar A.H."/>
        </authorList>
    </citation>
    <scope>IDENTIFICATION BY MASS SPECTROMETRY</scope>
    <scope>SUBCELLULAR LOCATION [LARGE SCALE ANALYSIS]</scope>
    <source>
        <strain>cv. Landsberg erecta</strain>
    </source>
</reference>
<reference key="7">
    <citation type="journal article" date="2007" name="Plant Physiol.">
        <title>Deletion of glycine decarboxylase in Arabidopsis is lethal under nonphotorespiratory conditions.</title>
        <authorList>
            <person name="Engel N."/>
            <person name="van den Daele K."/>
            <person name="Kolukisaoglu U."/>
            <person name="Morgenthal K."/>
            <person name="Weckwerth W."/>
            <person name="Paernik T."/>
            <person name="Keerberg O."/>
            <person name="Bauwe H."/>
        </authorList>
    </citation>
    <scope>FUNCTION</scope>
    <scope>DISRUPTION PHENOTYPE</scope>
    <scope>TISSUE SPECIFICITY</scope>
    <source>
        <strain>cv. Columbia</strain>
        <strain>cv. Wassilewskija</strain>
    </source>
</reference>
<reference key="8">
    <citation type="journal article" date="2010" name="Plant Physiol.">
        <title>Regulation of plant glycine decarboxylase by s-nitrosylation and glutathionylation.</title>
        <authorList>
            <person name="Palmieri M.C."/>
            <person name="Lindermayr C."/>
            <person name="Bauwe H."/>
            <person name="Steinhauser C."/>
            <person name="Durner J."/>
        </authorList>
    </citation>
    <scope>ACTIVITY REGULATION</scope>
    <scope>S-NITROSYLATION</scope>
    <scope>GLUTATHIONYLATION AT CYS-98; CYS-402; CYS-463; CYS-777; CYS-943 AND CYS-1022</scope>
</reference>
<comment type="function">
    <text evidence="1 3">The glycine decarboxylase (GDC) or glycine cleavage system catalyzes the degradation of glycine. The P protein binds the alpha-amino group of glycine through its pyridoxal phosphate cofactor; CO(2) is released and the remaining methylamine moiety is then transferred to the lipoamide cofactor of the H protein (By similarity).</text>
</comment>
<comment type="catalytic activity">
    <reaction>
        <text>N(6)-[(R)-lipoyl]-L-lysyl-[glycine-cleavage complex H protein] + glycine + H(+) = N(6)-[(R)-S(8)-aminomethyldihydrolipoyl]-L-lysyl-[glycine-cleavage complex H protein] + CO2</text>
        <dbReference type="Rhea" id="RHEA:24304"/>
        <dbReference type="Rhea" id="RHEA-COMP:10494"/>
        <dbReference type="Rhea" id="RHEA-COMP:10495"/>
        <dbReference type="ChEBI" id="CHEBI:15378"/>
        <dbReference type="ChEBI" id="CHEBI:16526"/>
        <dbReference type="ChEBI" id="CHEBI:57305"/>
        <dbReference type="ChEBI" id="CHEBI:83099"/>
        <dbReference type="ChEBI" id="CHEBI:83143"/>
        <dbReference type="EC" id="1.4.4.2"/>
    </reaction>
</comment>
<comment type="cofactor">
    <cofactor evidence="1">
        <name>pyridoxal 5'-phosphate</name>
        <dbReference type="ChEBI" id="CHEBI:597326"/>
    </cofactor>
</comment>
<comment type="activity regulation">
    <text evidence="4">Inhibited by harpin, S-nitrosoglutathione (GSNO), nitric oxide, N-ethylmaleimide and 5,5'-dithiobis-(2-nitrobenzoic acid).</text>
</comment>
<comment type="subunit">
    <text evidence="1">Homodimer (By similarity). The glycine cleavage system is composed of four proteins: P, T, L and H.</text>
</comment>
<comment type="subcellular location">
    <subcellularLocation>
        <location evidence="2">Mitochondrion</location>
    </subcellularLocation>
</comment>
<comment type="alternative products">
    <event type="alternative splicing"/>
    <isoform>
        <id>Q94B78-1</id>
        <name>1</name>
        <sequence type="displayed"/>
    </isoform>
    <text>A number of isoforms are produced. According to EST sequences.</text>
</comment>
<comment type="tissue specificity">
    <text evidence="3">Expressed in leaves. Detected in roots, stems, flowers and siliques.</text>
</comment>
<comment type="PTM">
    <text evidence="4">Glutathionylated at Cys-98, Cys-777, Cys-943 and Cys-1022 after S-nitrosoglutathione treatment.</text>
</comment>
<comment type="PTM">
    <text evidence="4">S-nitrosylated at unknown positions by nitric oxide.</text>
</comment>
<comment type="disruption phenotype">
    <text evidence="3">No visible phenotype; due to the redundancy with GLDP2. Gldp1 and gldp2 double mutants have a seedling development arrested at the cotyledon stage even under nonphotorespiratory conditions.</text>
</comment>
<comment type="similarity">
    <text evidence="5">Belongs to the GcvP family.</text>
</comment>
<comment type="caution">
    <text evidence="5">This protein has also been shown to act as an inducible nitric oxide synthase (iNOS) (PubMed:12757708), but the paper has been retracted (PubMed:15599984).</text>
</comment>
<comment type="sequence caution" evidence="5">
    <conflict type="frameshift">
        <sequence resource="EMBL-CDS" id="AAN17423"/>
    </conflict>
</comment>
<proteinExistence type="evidence at protein level"/>
<sequence>MERARRLAYRGIVKRLVNDTKRHRNAETPHLVPHAPARYVSSLSPFISTPRSVNHTAAFGRHQQTRSISVDAVKPSDTFPRRHNSATPDEQTHMAKFCGFDHIDSLIDATVPKSIRLDSMKFSKFDAGLTESQMIQHMVDLASKNKVFKSFIGMGYYNTHVPTVILRNIMENPAWYTQYTPYQAEISQGRLESLLNFQTVITDLTGLPMSNASLLDEGTAAAEAMAMCNNILKGKKKTFVIASNCHPQTIDVCKTRADGFDLKVVTSDLKDIDYSSGDVCGVLVQYPGTEGEVLDYAEFVKNAHANGVKVVMATDLLALTVLKPPGEFGADIVVGSAQRFGVPMGYGGPHAAFLATSQEYKRMMPGRIIGISVDSSGKQALRMAMQTREQHIRRDKATSNICTAQALLANMAAMYAVYHGPAGLKSIAQRVHGLAGIFSLGLNKLGVAEVQELPFFDTVKIKCSDAHAIADAASKSEINLRVVDSTTITASFDETTTLDDVDKLFKVFASGKPVPFTAESLAPEVQNSIPSSLTRESPYLTHPIFNMYHTEHELLRYIHKLQSKDLSLCHSMIPLGSCTMKLNATTEMMPVTWPSFTDIHPFAPVEQAQGYQEMFENLGDLLCTITGFDSFSLQPNAGAAGEYAGLMVIRAYHMSRGDHHRNVCIIPVSAHGTNPASAAMCGMKIITVGTDAKGNINIEEVRKAAEANKDNLAALMVTYPSTHGVYEEGIDEICNIIHENGGQVYMDGANMNAQVGLTSPGFIGADVCHLNLHKTFCIPHGGGGPGMGPIGVKNHLAPFLPSHPVIPTGGIPQPEKTAPLGAISAAPWGSALILPISYTYIAMMGSGGLTDASKIAILNANYMAKRLEKHYPVLFRGVNGTVAHEFIIDLRGFKNTAGIEPEDVAKRLMDYGFHGPTMSWPVPGTLMIEPTESESKAELDRFCDALISIREEIAQIEKGNADVQNNVLKGAPHPPSLLMADTWKKPYSREYAAFPAPWLRSSKFWPTTGRVDNVYGDRKLVCTLLPEEEQVAAAVSA</sequence>